<name>HEM32_STRCO</name>
<sequence>MRMSAPELIRIVSRDSPMALAQVERVRAELAALHPGVRTEVVPVRTTGDKWLGDLSQVEGKGAFTKEVDAALLSGEADLAVHCVKDVPADRPLPAGTVFAAFLKRDDVRDALVHPDGLTLDELPDGTRVGTSSVRRVAQLAATHPHLRCVPFRGNANRRLAKLAAGEADALLLAVSGLERIGRTDVISEVLSTETMMPPIGAGILALQCREGDRALIEAVSALGDPRTHREATAERMFLHVLQGHCNSPIAGHAQVDRSGELSLRACVFTPDGKVRLNAHEWAGRLDPATLGTSVAVALLRQGAREIIDGIAH</sequence>
<protein>
    <recommendedName>
        <fullName>Porphobilinogen deaminase 2</fullName>
        <shortName>PBG 2</shortName>
        <ecNumber>2.5.1.61</ecNumber>
    </recommendedName>
    <alternativeName>
        <fullName>Hydroxymethylbilane synthase 2</fullName>
        <shortName>HMBS 2</shortName>
    </alternativeName>
    <alternativeName>
        <fullName>Pre-uroporphyrinogen synthase 2</fullName>
    </alternativeName>
</protein>
<accession>Q9KY00</accession>
<proteinExistence type="inferred from homology"/>
<comment type="function">
    <text evidence="1">Tetrapolymerization of the monopyrrole PBG into the hydroxymethylbilane pre-uroporphyrinogen in several discrete steps.</text>
</comment>
<comment type="catalytic activity">
    <reaction>
        <text>4 porphobilinogen + H2O = hydroxymethylbilane + 4 NH4(+)</text>
        <dbReference type="Rhea" id="RHEA:13185"/>
        <dbReference type="ChEBI" id="CHEBI:15377"/>
        <dbReference type="ChEBI" id="CHEBI:28938"/>
        <dbReference type="ChEBI" id="CHEBI:57845"/>
        <dbReference type="ChEBI" id="CHEBI:58126"/>
        <dbReference type="EC" id="2.5.1.61"/>
    </reaction>
</comment>
<comment type="cofactor">
    <cofactor evidence="1">
        <name>dipyrromethane</name>
        <dbReference type="ChEBI" id="CHEBI:60342"/>
    </cofactor>
    <text evidence="1">Binds 1 dipyrromethane group covalently.</text>
</comment>
<comment type="pathway">
    <text>Porphyrin-containing compound metabolism; protoporphyrin-IX biosynthesis; coproporphyrinogen-III from 5-aminolevulinate: step 2/4.</text>
</comment>
<comment type="subunit">
    <text evidence="1">Monomer.</text>
</comment>
<comment type="miscellaneous">
    <text evidence="1">The porphobilinogen subunits are added to the dipyrromethane group.</text>
</comment>
<comment type="similarity">
    <text evidence="2">Belongs to the HMBS family.</text>
</comment>
<feature type="chain" id="PRO_0000143000" description="Porphobilinogen deaminase 2">
    <location>
        <begin position="1"/>
        <end position="313"/>
    </location>
</feature>
<feature type="modified residue" description="S-(dipyrrolylmethanemethyl)cysteine" evidence="1">
    <location>
        <position position="246"/>
    </location>
</feature>
<reference key="1">
    <citation type="journal article" date="2002" name="Nature">
        <title>Complete genome sequence of the model actinomycete Streptomyces coelicolor A3(2).</title>
        <authorList>
            <person name="Bentley S.D."/>
            <person name="Chater K.F."/>
            <person name="Cerdeno-Tarraga A.-M."/>
            <person name="Challis G.L."/>
            <person name="Thomson N.R."/>
            <person name="James K.D."/>
            <person name="Harris D.E."/>
            <person name="Quail M.A."/>
            <person name="Kieser H."/>
            <person name="Harper D."/>
            <person name="Bateman A."/>
            <person name="Brown S."/>
            <person name="Chandra G."/>
            <person name="Chen C.W."/>
            <person name="Collins M."/>
            <person name="Cronin A."/>
            <person name="Fraser A."/>
            <person name="Goble A."/>
            <person name="Hidalgo J."/>
            <person name="Hornsby T."/>
            <person name="Howarth S."/>
            <person name="Huang C.-H."/>
            <person name="Kieser T."/>
            <person name="Larke L."/>
            <person name="Murphy L.D."/>
            <person name="Oliver K."/>
            <person name="O'Neil S."/>
            <person name="Rabbinowitsch E."/>
            <person name="Rajandream M.A."/>
            <person name="Rutherford K.M."/>
            <person name="Rutter S."/>
            <person name="Seeger K."/>
            <person name="Saunders D."/>
            <person name="Sharp S."/>
            <person name="Squares R."/>
            <person name="Squares S."/>
            <person name="Taylor K."/>
            <person name="Warren T."/>
            <person name="Wietzorrek A."/>
            <person name="Woodward J.R."/>
            <person name="Barrell B.G."/>
            <person name="Parkhill J."/>
            <person name="Hopwood D.A."/>
        </authorList>
    </citation>
    <scope>NUCLEOTIDE SEQUENCE [LARGE SCALE GENOMIC DNA]</scope>
    <source>
        <strain>ATCC BAA-471 / A3(2) / M145</strain>
    </source>
</reference>
<gene>
    <name type="primary">hemC2</name>
    <name type="ordered locus">SCO7343</name>
    <name type="ORF">SC4G10.22c</name>
</gene>
<dbReference type="EC" id="2.5.1.61"/>
<dbReference type="EMBL" id="AL939131">
    <property type="protein sequence ID" value="CAB92889.1"/>
    <property type="molecule type" value="Genomic_DNA"/>
</dbReference>
<dbReference type="RefSeq" id="NP_631397.1">
    <property type="nucleotide sequence ID" value="NC_003888.3"/>
</dbReference>
<dbReference type="SMR" id="Q9KY00"/>
<dbReference type="STRING" id="100226.gene:17765003"/>
<dbReference type="PaxDb" id="100226-SCO7343"/>
<dbReference type="KEGG" id="sco:SCO7343"/>
<dbReference type="PATRIC" id="fig|100226.15.peg.7447"/>
<dbReference type="eggNOG" id="COG0181">
    <property type="taxonomic scope" value="Bacteria"/>
</dbReference>
<dbReference type="HOGENOM" id="CLU_019704_0_2_11"/>
<dbReference type="InParanoid" id="Q9KY00"/>
<dbReference type="OrthoDB" id="9810298at2"/>
<dbReference type="PhylomeDB" id="Q9KY00"/>
<dbReference type="UniPathway" id="UPA00251">
    <property type="reaction ID" value="UER00319"/>
</dbReference>
<dbReference type="Proteomes" id="UP000001973">
    <property type="component" value="Chromosome"/>
</dbReference>
<dbReference type="GO" id="GO:0005737">
    <property type="term" value="C:cytoplasm"/>
    <property type="evidence" value="ECO:0000318"/>
    <property type="project" value="GO_Central"/>
</dbReference>
<dbReference type="GO" id="GO:0004418">
    <property type="term" value="F:hydroxymethylbilane synthase activity"/>
    <property type="evidence" value="ECO:0000318"/>
    <property type="project" value="GO_Central"/>
</dbReference>
<dbReference type="GO" id="GO:0006783">
    <property type="term" value="P:heme biosynthetic process"/>
    <property type="evidence" value="ECO:0000318"/>
    <property type="project" value="GO_Central"/>
</dbReference>
<dbReference type="GO" id="GO:0006782">
    <property type="term" value="P:protoporphyrinogen IX biosynthetic process"/>
    <property type="evidence" value="ECO:0007669"/>
    <property type="project" value="UniProtKB-UniRule"/>
</dbReference>
<dbReference type="FunFam" id="3.30.160.40:FF:000001">
    <property type="entry name" value="Porphobilinogen deaminase"/>
    <property type="match status" value="1"/>
</dbReference>
<dbReference type="FunFam" id="3.40.190.10:FF:000005">
    <property type="entry name" value="Porphobilinogen deaminase"/>
    <property type="match status" value="1"/>
</dbReference>
<dbReference type="FunFam" id="3.40.190.10:FF:000091">
    <property type="entry name" value="Porphobilinogen deaminase"/>
    <property type="match status" value="1"/>
</dbReference>
<dbReference type="Gene3D" id="3.40.190.10">
    <property type="entry name" value="Periplasmic binding protein-like II"/>
    <property type="match status" value="2"/>
</dbReference>
<dbReference type="Gene3D" id="3.30.160.40">
    <property type="entry name" value="Porphobilinogen deaminase, C-terminal domain"/>
    <property type="match status" value="1"/>
</dbReference>
<dbReference type="HAMAP" id="MF_00260">
    <property type="entry name" value="Porphobil_deam"/>
    <property type="match status" value="1"/>
</dbReference>
<dbReference type="InterPro" id="IPR000860">
    <property type="entry name" value="HemC"/>
</dbReference>
<dbReference type="InterPro" id="IPR022419">
    <property type="entry name" value="Porphobilin_deaminase_cofac_BS"/>
</dbReference>
<dbReference type="InterPro" id="IPR022417">
    <property type="entry name" value="Porphobilin_deaminase_N"/>
</dbReference>
<dbReference type="InterPro" id="IPR022418">
    <property type="entry name" value="Porphobilinogen_deaminase_C"/>
</dbReference>
<dbReference type="InterPro" id="IPR036803">
    <property type="entry name" value="Porphobilinogen_deaminase_C_sf"/>
</dbReference>
<dbReference type="NCBIfam" id="TIGR00212">
    <property type="entry name" value="hemC"/>
    <property type="match status" value="1"/>
</dbReference>
<dbReference type="PANTHER" id="PTHR11557">
    <property type="entry name" value="PORPHOBILINOGEN DEAMINASE"/>
    <property type="match status" value="1"/>
</dbReference>
<dbReference type="PANTHER" id="PTHR11557:SF0">
    <property type="entry name" value="PORPHOBILINOGEN DEAMINASE"/>
    <property type="match status" value="1"/>
</dbReference>
<dbReference type="Pfam" id="PF01379">
    <property type="entry name" value="Porphobil_deam"/>
    <property type="match status" value="1"/>
</dbReference>
<dbReference type="Pfam" id="PF03900">
    <property type="entry name" value="Porphobil_deamC"/>
    <property type="match status" value="1"/>
</dbReference>
<dbReference type="PIRSF" id="PIRSF001438">
    <property type="entry name" value="4pyrrol_synth_OHMeBilane_synth"/>
    <property type="match status" value="1"/>
</dbReference>
<dbReference type="PRINTS" id="PR00151">
    <property type="entry name" value="PORPHBDMNASE"/>
</dbReference>
<dbReference type="SUPFAM" id="SSF53850">
    <property type="entry name" value="Periplasmic binding protein-like II"/>
    <property type="match status" value="1"/>
</dbReference>
<dbReference type="SUPFAM" id="SSF54782">
    <property type="entry name" value="Porphobilinogen deaminase (hydroxymethylbilane synthase), C-terminal domain"/>
    <property type="match status" value="1"/>
</dbReference>
<dbReference type="PROSITE" id="PS00533">
    <property type="entry name" value="PORPHOBILINOGEN_DEAM"/>
    <property type="match status" value="1"/>
</dbReference>
<organism>
    <name type="scientific">Streptomyces coelicolor (strain ATCC BAA-471 / A3(2) / M145)</name>
    <dbReference type="NCBI Taxonomy" id="100226"/>
    <lineage>
        <taxon>Bacteria</taxon>
        <taxon>Bacillati</taxon>
        <taxon>Actinomycetota</taxon>
        <taxon>Actinomycetes</taxon>
        <taxon>Kitasatosporales</taxon>
        <taxon>Streptomycetaceae</taxon>
        <taxon>Streptomyces</taxon>
        <taxon>Streptomyces albidoflavus group</taxon>
    </lineage>
</organism>
<evidence type="ECO:0000250" key="1"/>
<evidence type="ECO:0000305" key="2"/>
<keyword id="KW-0627">Porphyrin biosynthesis</keyword>
<keyword id="KW-1185">Reference proteome</keyword>
<keyword id="KW-0808">Transferase</keyword>